<protein>
    <recommendedName>
        <fullName evidence="2">RNA-splicing ligase RtcB homolog</fullName>
        <ecNumber evidence="2 3 4">6.5.1.8</ecNumber>
    </recommendedName>
    <alternativeName>
        <fullName evidence="2">3'-phosphate/5'-hydroxy nucleic acid ligase</fullName>
    </alternativeName>
</protein>
<dbReference type="EC" id="6.5.1.8" evidence="2 3 4"/>
<dbReference type="EMBL" id="Z81505">
    <property type="protein sequence ID" value="CAB04121.2"/>
    <property type="molecule type" value="Genomic_DNA"/>
</dbReference>
<dbReference type="PIR" id="T21006">
    <property type="entry name" value="T21006"/>
</dbReference>
<dbReference type="RefSeq" id="NP_492498.1">
    <property type="nucleotide sequence ID" value="NM_060097.6"/>
</dbReference>
<dbReference type="SMR" id="P90838"/>
<dbReference type="FunCoup" id="P90838">
    <property type="interactions" value="2366"/>
</dbReference>
<dbReference type="STRING" id="6239.F16A11.2a.1"/>
<dbReference type="PaxDb" id="6239-F16A11.2"/>
<dbReference type="PeptideAtlas" id="P90838"/>
<dbReference type="EnsemblMetazoa" id="F16A11.2a.1">
    <property type="protein sequence ID" value="F16A11.2a.1"/>
    <property type="gene ID" value="WBGene00008877"/>
</dbReference>
<dbReference type="GeneID" id="184556"/>
<dbReference type="KEGG" id="cel:CELE_F16A11.2"/>
<dbReference type="UCSC" id="F16A11.2">
    <property type="organism name" value="c. elegans"/>
</dbReference>
<dbReference type="AGR" id="WB:WBGene00008877"/>
<dbReference type="CTD" id="184556"/>
<dbReference type="WormBase" id="F16A11.2a">
    <property type="protein sequence ID" value="CE23663"/>
    <property type="gene ID" value="WBGene00008877"/>
    <property type="gene designation" value="rtcb-1"/>
</dbReference>
<dbReference type="eggNOG" id="KOG3833">
    <property type="taxonomic scope" value="Eukaryota"/>
</dbReference>
<dbReference type="GeneTree" id="ENSGT00940000155911"/>
<dbReference type="HOGENOM" id="CLU_022279_0_0_1"/>
<dbReference type="InParanoid" id="P90838"/>
<dbReference type="OMA" id="QTRGVEC"/>
<dbReference type="OrthoDB" id="10249697at2759"/>
<dbReference type="PhylomeDB" id="P90838"/>
<dbReference type="BRENDA" id="6.5.1.8">
    <property type="organism ID" value="1045"/>
</dbReference>
<dbReference type="PRO" id="PR:P90838"/>
<dbReference type="Proteomes" id="UP000001940">
    <property type="component" value="Chromosome I"/>
</dbReference>
<dbReference type="Bgee" id="WBGene00008877">
    <property type="expression patterns" value="Expressed in germ line (C elegans) and 4 other cell types or tissues"/>
</dbReference>
<dbReference type="GO" id="GO:0005737">
    <property type="term" value="C:cytoplasm"/>
    <property type="evidence" value="ECO:0000314"/>
    <property type="project" value="WormBase"/>
</dbReference>
<dbReference type="GO" id="GO:0005789">
    <property type="term" value="C:endoplasmic reticulum membrane"/>
    <property type="evidence" value="ECO:0000250"/>
    <property type="project" value="WormBase"/>
</dbReference>
<dbReference type="GO" id="GO:0005635">
    <property type="term" value="C:nuclear envelope"/>
    <property type="evidence" value="ECO:0000250"/>
    <property type="project" value="WormBase"/>
</dbReference>
<dbReference type="GO" id="GO:0005634">
    <property type="term" value="C:nucleus"/>
    <property type="evidence" value="ECO:0000314"/>
    <property type="project" value="WormBase"/>
</dbReference>
<dbReference type="GO" id="GO:0072669">
    <property type="term" value="C:tRNA-splicing ligase complex"/>
    <property type="evidence" value="ECO:0000250"/>
    <property type="project" value="WormBase"/>
</dbReference>
<dbReference type="GO" id="GO:0005525">
    <property type="term" value="F:GTP binding"/>
    <property type="evidence" value="ECO:0007669"/>
    <property type="project" value="UniProtKB-KW"/>
</dbReference>
<dbReference type="GO" id="GO:0046872">
    <property type="term" value="F:metal ion binding"/>
    <property type="evidence" value="ECO:0007669"/>
    <property type="project" value="UniProtKB-KW"/>
</dbReference>
<dbReference type="GO" id="GO:0003972">
    <property type="term" value="F:RNA ligase (ATP) activity"/>
    <property type="evidence" value="ECO:0000315"/>
    <property type="project" value="WormBase"/>
</dbReference>
<dbReference type="GO" id="GO:0170057">
    <property type="term" value="F:RNA ligase (GTP) activity"/>
    <property type="evidence" value="ECO:0000315"/>
    <property type="project" value="WormBase"/>
</dbReference>
<dbReference type="GO" id="GO:0007281">
    <property type="term" value="P:germ cell development"/>
    <property type="evidence" value="ECO:0000315"/>
    <property type="project" value="WormBase"/>
</dbReference>
<dbReference type="GO" id="GO:0036498">
    <property type="term" value="P:IRE1-mediated unfolded protein response"/>
    <property type="evidence" value="ECO:0000315"/>
    <property type="project" value="WormBase"/>
</dbReference>
<dbReference type="GO" id="GO:0006388">
    <property type="term" value="P:tRNA splicing, via endonucleolytic cleavage and ligation"/>
    <property type="evidence" value="ECO:0000318"/>
    <property type="project" value="GO_Central"/>
</dbReference>
<dbReference type="GO" id="GO:0040025">
    <property type="term" value="P:vulval development"/>
    <property type="evidence" value="ECO:0000315"/>
    <property type="project" value="WormBase"/>
</dbReference>
<dbReference type="FunFam" id="3.90.1860.10:FF:000001">
    <property type="entry name" value="tRNA-splicing ligase RtcB homolog"/>
    <property type="match status" value="1"/>
</dbReference>
<dbReference type="Gene3D" id="3.90.1860.10">
    <property type="entry name" value="tRNA-splicing ligase RtcB"/>
    <property type="match status" value="1"/>
</dbReference>
<dbReference type="HAMAP" id="MF_03144">
    <property type="entry name" value="RtcB_euk"/>
    <property type="match status" value="1"/>
</dbReference>
<dbReference type="InterPro" id="IPR001233">
    <property type="entry name" value="RtcB"/>
</dbReference>
<dbReference type="InterPro" id="IPR036025">
    <property type="entry name" value="RtcB-like_sf"/>
</dbReference>
<dbReference type="InterPro" id="IPR027513">
    <property type="entry name" value="RtcB_euk"/>
</dbReference>
<dbReference type="PANTHER" id="PTHR11118">
    <property type="entry name" value="RNA-SPLICING LIGASE RTCB HOMOLOG"/>
    <property type="match status" value="1"/>
</dbReference>
<dbReference type="PANTHER" id="PTHR11118:SF1">
    <property type="entry name" value="RNA-SPLICING LIGASE RTCB HOMOLOG"/>
    <property type="match status" value="1"/>
</dbReference>
<dbReference type="Pfam" id="PF01139">
    <property type="entry name" value="RtcB"/>
    <property type="match status" value="1"/>
</dbReference>
<dbReference type="SUPFAM" id="SSF103365">
    <property type="entry name" value="Hypothetical protein PH1602"/>
    <property type="match status" value="1"/>
</dbReference>
<dbReference type="PROSITE" id="PS01288">
    <property type="entry name" value="UPF0027"/>
    <property type="match status" value="1"/>
</dbReference>
<name>RTCB_CAEEL</name>
<reference key="1">
    <citation type="journal article" date="1998" name="Science">
        <title>Genome sequence of the nematode C. elegans: a platform for investigating biology.</title>
        <authorList>
            <consortium name="The C. elegans sequencing consortium"/>
        </authorList>
    </citation>
    <scope>NUCLEOTIDE SEQUENCE [LARGE SCALE GENOMIC DNA]</scope>
    <source>
        <strain>Bristol N2</strain>
    </source>
</reference>
<reference key="2">
    <citation type="journal article" date="2014" name="EMBO Rep.">
        <title>The RtcB RNA ligase is an essential component of the metazoan unfolded protein response.</title>
        <authorList>
            <person name="Kosmaczewski S.G."/>
            <person name="Edwards T.J."/>
            <person name="Han S.M."/>
            <person name="Eckwahl M.J."/>
            <person name="Meyer B.I."/>
            <person name="Peach S."/>
            <person name="Hesselberth J.R."/>
            <person name="Wolin S.L."/>
            <person name="Hammarlund M."/>
        </authorList>
    </citation>
    <scope>FUNCTION</scope>
    <scope>SUBCELLULAR LOCATION</scope>
    <scope>DISRUPTION PHENOTYPE</scope>
    <scope>MUTAGENESIS OF HIS-428</scope>
</reference>
<reference key="3">
    <citation type="journal article" date="2014" name="J. Neurosci.">
        <title>RTCB-1 mediates neuroprotection via XBP-1 mRNA splicing in the unfolded protein response pathway.</title>
        <authorList>
            <person name="Ray A."/>
            <person name="Zhang S."/>
            <person name="Rentas C."/>
            <person name="Caldwell K.A."/>
            <person name="Caldwell G.A."/>
        </authorList>
    </citation>
    <scope>FUNCTION</scope>
    <scope>DISRUPTION PHENOTYPE</scope>
    <scope>MUTAGENESIS OF CYS-122</scope>
</reference>
<keyword id="KW-0963">Cytoplasm</keyword>
<keyword id="KW-0342">GTP-binding</keyword>
<keyword id="KW-0436">Ligase</keyword>
<keyword id="KW-0464">Manganese</keyword>
<keyword id="KW-0479">Metal-binding</keyword>
<keyword id="KW-0547">Nucleotide-binding</keyword>
<keyword id="KW-0539">Nucleus</keyword>
<keyword id="KW-1185">Reference proteome</keyword>
<keyword id="KW-0819">tRNA processing</keyword>
<gene>
    <name evidence="5" type="primary">rtcb-1</name>
    <name evidence="5" type="ORF">F16A11.2</name>
</gene>
<organism>
    <name type="scientific">Caenorhabditis elegans</name>
    <dbReference type="NCBI Taxonomy" id="6239"/>
    <lineage>
        <taxon>Eukaryota</taxon>
        <taxon>Metazoa</taxon>
        <taxon>Ecdysozoa</taxon>
        <taxon>Nematoda</taxon>
        <taxon>Chromadorea</taxon>
        <taxon>Rhabditida</taxon>
        <taxon>Rhabditina</taxon>
        <taxon>Rhabditomorpha</taxon>
        <taxon>Rhabditoidea</taxon>
        <taxon>Rhabditidae</taxon>
        <taxon>Peloderinae</taxon>
        <taxon>Caenorhabditis</taxon>
    </lineage>
</organism>
<proteinExistence type="evidence at protein level"/>
<feature type="chain" id="PRO_0000215112" description="RNA-splicing ligase RtcB homolog">
    <location>
        <begin position="1"/>
        <end position="505"/>
    </location>
</feature>
<feature type="active site" description="GMP-histidine intermediate" evidence="2">
    <location>
        <position position="428"/>
    </location>
</feature>
<feature type="binding site" evidence="2">
    <location>
        <position position="119"/>
    </location>
    <ligand>
        <name>Mn(2+)</name>
        <dbReference type="ChEBI" id="CHEBI:29035"/>
        <label>1</label>
    </ligand>
</feature>
<feature type="binding site" evidence="2">
    <location>
        <position position="122"/>
    </location>
    <ligand>
        <name>Mn(2+)</name>
        <dbReference type="ChEBI" id="CHEBI:29035"/>
        <label>1</label>
    </ligand>
</feature>
<feature type="binding site" evidence="2">
    <location>
        <position position="122"/>
    </location>
    <ligand>
        <name>Mn(2+)</name>
        <dbReference type="ChEBI" id="CHEBI:29035"/>
        <label>2</label>
    </ligand>
</feature>
<feature type="binding site" evidence="2">
    <location>
        <begin position="226"/>
        <end position="230"/>
    </location>
    <ligand>
        <name>GMP</name>
        <dbReference type="ChEBI" id="CHEBI:58115"/>
    </ligand>
</feature>
<feature type="binding site" evidence="2">
    <location>
        <position position="227"/>
    </location>
    <ligand>
        <name>Mn(2+)</name>
        <dbReference type="ChEBI" id="CHEBI:29035"/>
        <label>1</label>
    </ligand>
</feature>
<feature type="binding site" evidence="2">
    <location>
        <position position="259"/>
    </location>
    <ligand>
        <name>Mn(2+)</name>
        <dbReference type="ChEBI" id="CHEBI:29035"/>
        <label>2</label>
    </ligand>
</feature>
<feature type="binding site" evidence="2">
    <location>
        <begin position="353"/>
        <end position="354"/>
    </location>
    <ligand>
        <name>GMP</name>
        <dbReference type="ChEBI" id="CHEBI:58115"/>
    </ligand>
</feature>
<feature type="binding site" evidence="2">
    <location>
        <position position="353"/>
    </location>
    <ligand>
        <name>Mn(2+)</name>
        <dbReference type="ChEBI" id="CHEBI:29035"/>
        <label>2</label>
    </ligand>
</feature>
<feature type="binding site" evidence="2">
    <location>
        <begin position="402"/>
        <end position="405"/>
    </location>
    <ligand>
        <name>GMP</name>
        <dbReference type="ChEBI" id="CHEBI:58115"/>
    </ligand>
</feature>
<feature type="binding site" evidence="2">
    <location>
        <position position="409"/>
    </location>
    <ligand>
        <name>GMP</name>
        <dbReference type="ChEBI" id="CHEBI:58115"/>
    </ligand>
</feature>
<feature type="binding site" evidence="2">
    <location>
        <begin position="428"/>
        <end position="431"/>
    </location>
    <ligand>
        <name>GMP</name>
        <dbReference type="ChEBI" id="CHEBI:58115"/>
    </ligand>
</feature>
<feature type="binding site" evidence="2">
    <location>
        <position position="504"/>
    </location>
    <ligand>
        <name>GMP</name>
        <dbReference type="ChEBI" id="CHEBI:58115"/>
    </ligand>
</feature>
<feature type="mutagenesis site" description="Abolishes ligase activity and is unable to provide a neuroprotective role in degenerating dopamine neurons." evidence="4">
    <original>C</original>
    <variation>A</variation>
    <location>
        <position position="122"/>
    </location>
</feature>
<feature type="mutagenesis site" description="Abolishes ligase activity and does not activate the unfolded protein response pathway in response to endoplasmic reticulum stress induced by tunicamycin." evidence="3">
    <original>H</original>
    <variation>A</variation>
    <location>
        <position position="428"/>
    </location>
</feature>
<accession>P90838</accession>
<sequence length="505" mass="55230">MPRTFEEECDFIDRLTDTKFRIKKGFVPNMNVEGRFYVNNSLEQLMFDELKFSCDGQGIGGFLPAVRQIANVASLPGIVGHSIGLPDIHSGYGFSIGNIAAFDVGNPESVISPGGVGFDINCGVRLLRTNLFEENVKPLKEQLTQSLFDHIPVGVGSRGAIPMLASDLVECLEMGMDWTLREGYSWAEDKEHCEEYGRMLQADASKVSLRAKKRGLPQLGTLGAGNHYAEVQVVDEIYDKHAASTMGIDEEGQVVVMLHCGSRGLGHQVATDSLVEMEKAMARDGIVVNDKQLACARINSVEGKNYFSGMAAAANFAWVNRSCITFCVRNAFQKTFGMSADDMDMQVIYDVSHNVAKMEEHMVDGRPRQLCVHRKGATRAFPAHHPLIPVDYQLIGQPVLIGGSMGTCSYVLTGTEQGLVETFGTTCHGAGRALSRAKSRRTITWDSVIDDLKKKEISIRIASPKLIMEEAPESYKNVTDVVDTCDAAGISKKAVKLRPIAVIKG</sequence>
<evidence type="ECO:0000250" key="1">
    <source>
        <dbReference type="UniProtKB" id="Q9Y3I0"/>
    </source>
</evidence>
<evidence type="ECO:0000255" key="2">
    <source>
        <dbReference type="HAMAP-Rule" id="MF_03144"/>
    </source>
</evidence>
<evidence type="ECO:0000269" key="3">
    <source>
    </source>
</evidence>
<evidence type="ECO:0000269" key="4">
    <source>
    </source>
</evidence>
<evidence type="ECO:0000312" key="5">
    <source>
        <dbReference type="WormBase" id="F16A11.2a"/>
    </source>
</evidence>
<comment type="function">
    <text evidence="3 4">Catalytic subunit of the tRNA-splicing ligase complex that acts by directly joining spliced tRNA halves to mature-sized tRNAs (PubMed:25366321). Required for the ligation of mRNAs and specifically, regulates xbp-1 mRNA splicing during the endoplasmic reticulum stress-induced unfolded protein response (PubMed:25366321, PubMed:25429148). Has a neuroprotective role in the age-dependent degeneration of dopamine neurons, which is mediated by xbp-1 (PubMed:25429148).</text>
</comment>
<comment type="catalytic activity">
    <reaction evidence="2 3 4">
        <text>a 3'-end 3'-phospho-ribonucleotide-RNA + a 5'-end dephospho-ribonucleoside-RNA + GTP = a ribonucleotidyl-ribonucleotide-RNA + GMP + diphosphate</text>
        <dbReference type="Rhea" id="RHEA:68076"/>
        <dbReference type="Rhea" id="RHEA-COMP:10463"/>
        <dbReference type="Rhea" id="RHEA-COMP:13936"/>
        <dbReference type="Rhea" id="RHEA-COMP:17355"/>
        <dbReference type="ChEBI" id="CHEBI:33019"/>
        <dbReference type="ChEBI" id="CHEBI:37565"/>
        <dbReference type="ChEBI" id="CHEBI:58115"/>
        <dbReference type="ChEBI" id="CHEBI:83062"/>
        <dbReference type="ChEBI" id="CHEBI:138284"/>
        <dbReference type="ChEBI" id="CHEBI:173118"/>
        <dbReference type="EC" id="6.5.1.8"/>
    </reaction>
</comment>
<comment type="catalytic activity">
    <reaction evidence="2 3 4">
        <text>a 3'-end 2',3'-cyclophospho-ribonucleotide-RNA + a 5'-end dephospho-ribonucleoside-RNA + GTP + H2O = a ribonucleotidyl-ribonucleotide-RNA + GMP + diphosphate + H(+)</text>
        <dbReference type="Rhea" id="RHEA:68080"/>
        <dbReference type="Rhea" id="RHEA-COMP:10464"/>
        <dbReference type="Rhea" id="RHEA-COMP:13936"/>
        <dbReference type="Rhea" id="RHEA-COMP:17355"/>
        <dbReference type="ChEBI" id="CHEBI:15377"/>
        <dbReference type="ChEBI" id="CHEBI:15378"/>
        <dbReference type="ChEBI" id="CHEBI:33019"/>
        <dbReference type="ChEBI" id="CHEBI:37565"/>
        <dbReference type="ChEBI" id="CHEBI:58115"/>
        <dbReference type="ChEBI" id="CHEBI:83064"/>
        <dbReference type="ChEBI" id="CHEBI:138284"/>
        <dbReference type="ChEBI" id="CHEBI:173118"/>
        <dbReference type="EC" id="6.5.1.8"/>
    </reaction>
</comment>
<comment type="cofactor">
    <cofactor evidence="2">
        <name>Mn(2+)</name>
        <dbReference type="ChEBI" id="CHEBI:29035"/>
    </cofactor>
    <text evidence="2">Binds 2 manganese ions per subunit.</text>
</comment>
<comment type="subunit">
    <text evidence="2">Catalytic component of the tRNA-splicing ligase complex.</text>
</comment>
<comment type="subcellular location">
    <subcellularLocation>
        <location evidence="3">Nucleus</location>
    </subcellularLocation>
    <subcellularLocation>
        <location evidence="3">Cytoplasm</location>
    </subcellularLocation>
</comment>
<comment type="disruption phenotype">
    <text evidence="3 4">Mutants are sterile and few are viable (PubMed:25366321, PubMed:25429148). Mutants have a slower growth rate, reduced lifespan and have defective vulval development displaying a severe protruding vulva phenotype (PubMed:25366321, PubMed:25429148). Mutants have disrupted RNA ligase activity which results in the presence of unligated tRNAs and defective tRNA processing (PubMed:25366321). RNAi-mediated knockdown results in reduced sensitivity to tunicamycin-induced endoplasmic reticulum (ER) stress and significantly reduced levels of spliced xbp-1 mRNA under tunicamycin-induced ER stress and non-stressed conditions (PubMed:25429148). RNAi-mediated knockdown in dopamine neurons enhances degenerative effects induced by alpha-synuclein and the neurotoxin, 6-OHDA (PubMed:25429148).</text>
</comment>
<comment type="miscellaneous">
    <text evidence="1 2">Ligation probably proceeds through 3 nucleotidyl transfer steps, with 2',3'-cyclic phosphate termini being hydrolyzed to 3'-P termini in a step that precedes 3'-P activation with GMP. In the first nucleotidyl transfer step, RTCB reacts with GTP to form a covalent RTCB-histidine-GMP intermediate with release of PPi; in the second step, the GMP moiety is transferred to the RNA 3'-P; in the third step, the 5'-OH from the opposite RNA strand attacks the activated 3'-P to form a 3',5'-phosphodiester bond and release GMP.</text>
</comment>
<comment type="similarity">
    <text evidence="2">Belongs to the RtcB family.</text>
</comment>